<protein>
    <recommendedName>
        <fullName evidence="1">DNA gyrase subunit B</fullName>
        <ecNumber evidence="1">5.6.2.2</ecNumber>
    </recommendedName>
</protein>
<organism>
    <name type="scientific">Streptococcus pyogenes serotype M1</name>
    <dbReference type="NCBI Taxonomy" id="301447"/>
    <lineage>
        <taxon>Bacteria</taxon>
        <taxon>Bacillati</taxon>
        <taxon>Bacillota</taxon>
        <taxon>Bacilli</taxon>
        <taxon>Lactobacillales</taxon>
        <taxon>Streptococcaceae</taxon>
        <taxon>Streptococcus</taxon>
    </lineage>
</organism>
<accession>Q9A0L0</accession>
<accession>Q48ZP7</accession>
<comment type="function">
    <text evidence="1">A type II topoisomerase that negatively supercoils closed circular double-stranded (ds) DNA in an ATP-dependent manner to modulate DNA topology and maintain chromosomes in an underwound state. Negative supercoiling favors strand separation, and DNA replication, transcription, recombination and repair, all of which involve strand separation. Also able to catalyze the interconversion of other topological isomers of dsDNA rings, including catenanes and knotted rings. Type II topoisomerases break and join 2 DNA strands simultaneously in an ATP-dependent manner.</text>
</comment>
<comment type="catalytic activity">
    <reaction evidence="1">
        <text>ATP-dependent breakage, passage and rejoining of double-stranded DNA.</text>
        <dbReference type="EC" id="5.6.2.2"/>
    </reaction>
</comment>
<comment type="cofactor">
    <cofactor evidence="1">
        <name>Mg(2+)</name>
        <dbReference type="ChEBI" id="CHEBI:18420"/>
    </cofactor>
    <cofactor evidence="1">
        <name>Mn(2+)</name>
        <dbReference type="ChEBI" id="CHEBI:29035"/>
    </cofactor>
    <cofactor evidence="1">
        <name>Ca(2+)</name>
        <dbReference type="ChEBI" id="CHEBI:29108"/>
    </cofactor>
    <text evidence="1">Binds two Mg(2+) per subunit. The magnesium ions form salt bridges with both the protein and the DNA. Can also accept other divalent metal cations, such as Mn(2+) or Ca(2+).</text>
</comment>
<comment type="subunit">
    <text evidence="1">Heterotetramer, composed of two GyrA and two GyrB chains. In the heterotetramer, GyrA contains the active site tyrosine that forms a transient covalent intermediate with DNA, while GyrB binds cofactors and catalyzes ATP hydrolysis.</text>
</comment>
<comment type="subcellular location">
    <subcellularLocation>
        <location evidence="1">Cytoplasm</location>
    </subcellularLocation>
</comment>
<comment type="miscellaneous">
    <text evidence="1">Few gyrases are as efficient as E.coli at forming negative supercoils. Not all organisms have 2 type II topoisomerases; in organisms with a single type II topoisomerase this enzyme also has to decatenate newly replicated chromosomes.</text>
</comment>
<comment type="similarity">
    <text evidence="1">Belongs to the type II topoisomerase GyrB family.</text>
</comment>
<sequence length="650" mass="72271">MIEENKHFEKKMQEYDASQIQVLEGLEAVRMRPGMYIGSTAKEGLHHLVWEIVDNSIDEALAGFASHIKVFIEADNSITVVDDGRGIPVDIQAKTGRPAVETVFTVLHAGGKFGGGGYKVSGGLHGVGSSVVNALSTQLDVRVYKNGQIHYQEFKRGAVVADLEVIGTTDVTGTTVHFTPDPEIFTETTQFDYSVLAKRIQELAFLNRGLKISITDKRSGMEQEEHFLYEGGIGSYVEFLNDKKDVIFETPIYTDGELEGIAVEVAMQYTTSYQETVMSFANNIHTHEGGTHEQGFRAALTRVINDYAKKNKILKENEDNLTGEDVREGLTAVISVKHPNPQFEGQTKTKLGNSEVVKITNRLFSEAFQRFLLENPQVARKIVEKGILASKARIAAKRAREVTRKKSGLEISNLPGKLADCSSNDANQNELFIVEGDSAGGSAKSGRNREFQAILPIRGKILNVEKATMDKILANEEIRSLFTAMGTGFGADFDVSKARYQKLVIMTDADVDGAHIRTLLLTLIYRFMRPVLEAGYVYIAQPPIYGVKVGSEIKEYIQPGIDQEDQLKTALEKYSIGRSKPTVQRYKGLGEMDDHQLWETTMDPENRLMARVTVDDAAEADKVFDMLMGDRVEPRRDFIEENAVYSTLDI</sequence>
<name>GYRB_STRP1</name>
<dbReference type="EC" id="5.6.2.2" evidence="1"/>
<dbReference type="EMBL" id="AE004092">
    <property type="protein sequence ID" value="AAK33677.1"/>
    <property type="molecule type" value="Genomic_DNA"/>
</dbReference>
<dbReference type="EMBL" id="CP000017">
    <property type="protein sequence ID" value="AAZ51171.1"/>
    <property type="molecule type" value="Genomic_DNA"/>
</dbReference>
<dbReference type="RefSeq" id="NP_268956.1">
    <property type="nucleotide sequence ID" value="NC_002737.2"/>
</dbReference>
<dbReference type="SMR" id="Q9A0L0"/>
<dbReference type="PaxDb" id="1314-HKU360_00564"/>
<dbReference type="KEGG" id="spy:SPy_0727"/>
<dbReference type="KEGG" id="spz:M5005_Spy0553"/>
<dbReference type="PATRIC" id="fig|160490.10.peg.619"/>
<dbReference type="HOGENOM" id="CLU_006146_1_2_9"/>
<dbReference type="OMA" id="QLWSTTM"/>
<dbReference type="Proteomes" id="UP000000750">
    <property type="component" value="Chromosome"/>
</dbReference>
<dbReference type="GO" id="GO:0005694">
    <property type="term" value="C:chromosome"/>
    <property type="evidence" value="ECO:0007669"/>
    <property type="project" value="InterPro"/>
</dbReference>
<dbReference type="GO" id="GO:0005737">
    <property type="term" value="C:cytoplasm"/>
    <property type="evidence" value="ECO:0007669"/>
    <property type="project" value="UniProtKB-SubCell"/>
</dbReference>
<dbReference type="GO" id="GO:0005524">
    <property type="term" value="F:ATP binding"/>
    <property type="evidence" value="ECO:0007669"/>
    <property type="project" value="UniProtKB-UniRule"/>
</dbReference>
<dbReference type="GO" id="GO:0003677">
    <property type="term" value="F:DNA binding"/>
    <property type="evidence" value="ECO:0007669"/>
    <property type="project" value="UniProtKB-KW"/>
</dbReference>
<dbReference type="GO" id="GO:0034335">
    <property type="term" value="F:DNA negative supercoiling activity"/>
    <property type="evidence" value="ECO:0007669"/>
    <property type="project" value="UniProtKB-ARBA"/>
</dbReference>
<dbReference type="GO" id="GO:0046872">
    <property type="term" value="F:metal ion binding"/>
    <property type="evidence" value="ECO:0007669"/>
    <property type="project" value="UniProtKB-KW"/>
</dbReference>
<dbReference type="GO" id="GO:0006265">
    <property type="term" value="P:DNA topological change"/>
    <property type="evidence" value="ECO:0007669"/>
    <property type="project" value="UniProtKB-UniRule"/>
</dbReference>
<dbReference type="GO" id="GO:0006261">
    <property type="term" value="P:DNA-templated DNA replication"/>
    <property type="evidence" value="ECO:0007669"/>
    <property type="project" value="UniProtKB-UniRule"/>
</dbReference>
<dbReference type="CDD" id="cd16928">
    <property type="entry name" value="HATPase_GyrB-like"/>
    <property type="match status" value="1"/>
</dbReference>
<dbReference type="CDD" id="cd00822">
    <property type="entry name" value="TopoII_Trans_DNA_gyrase"/>
    <property type="match status" value="1"/>
</dbReference>
<dbReference type="CDD" id="cd03366">
    <property type="entry name" value="TOPRIM_TopoIIA_GyrB"/>
    <property type="match status" value="1"/>
</dbReference>
<dbReference type="FunFam" id="3.30.230.10:FF:000005">
    <property type="entry name" value="DNA gyrase subunit B"/>
    <property type="match status" value="1"/>
</dbReference>
<dbReference type="FunFam" id="3.30.565.10:FF:000002">
    <property type="entry name" value="DNA gyrase subunit B"/>
    <property type="match status" value="1"/>
</dbReference>
<dbReference type="FunFam" id="3.40.50.670:FF:000002">
    <property type="entry name" value="DNA gyrase subunit B"/>
    <property type="match status" value="1"/>
</dbReference>
<dbReference type="Gene3D" id="3.30.230.10">
    <property type="match status" value="1"/>
</dbReference>
<dbReference type="Gene3D" id="3.40.50.670">
    <property type="match status" value="1"/>
</dbReference>
<dbReference type="Gene3D" id="3.30.565.10">
    <property type="entry name" value="Histidine kinase-like ATPase, C-terminal domain"/>
    <property type="match status" value="1"/>
</dbReference>
<dbReference type="HAMAP" id="MF_01898">
    <property type="entry name" value="GyrB"/>
    <property type="match status" value="1"/>
</dbReference>
<dbReference type="InterPro" id="IPR002288">
    <property type="entry name" value="DNA_gyrase_B_C"/>
</dbReference>
<dbReference type="InterPro" id="IPR011557">
    <property type="entry name" value="GyrB"/>
</dbReference>
<dbReference type="InterPro" id="IPR036890">
    <property type="entry name" value="HATPase_C_sf"/>
</dbReference>
<dbReference type="InterPro" id="IPR020568">
    <property type="entry name" value="Ribosomal_Su5_D2-typ_SF"/>
</dbReference>
<dbReference type="InterPro" id="IPR014721">
    <property type="entry name" value="Ribsml_uS5_D2-typ_fold_subgr"/>
</dbReference>
<dbReference type="InterPro" id="IPR001241">
    <property type="entry name" value="Topo_IIA"/>
</dbReference>
<dbReference type="InterPro" id="IPR013760">
    <property type="entry name" value="Topo_IIA-like_dom_sf"/>
</dbReference>
<dbReference type="InterPro" id="IPR000565">
    <property type="entry name" value="Topo_IIA_B"/>
</dbReference>
<dbReference type="InterPro" id="IPR013759">
    <property type="entry name" value="Topo_IIA_B_C"/>
</dbReference>
<dbReference type="InterPro" id="IPR013506">
    <property type="entry name" value="Topo_IIA_bsu_dom2"/>
</dbReference>
<dbReference type="InterPro" id="IPR018522">
    <property type="entry name" value="TopoIIA_CS"/>
</dbReference>
<dbReference type="InterPro" id="IPR006171">
    <property type="entry name" value="TOPRIM_dom"/>
</dbReference>
<dbReference type="InterPro" id="IPR034160">
    <property type="entry name" value="TOPRIM_GyrB"/>
</dbReference>
<dbReference type="NCBIfam" id="TIGR01059">
    <property type="entry name" value="gyrB"/>
    <property type="match status" value="1"/>
</dbReference>
<dbReference type="NCBIfam" id="NF004189">
    <property type="entry name" value="PRK05644.1"/>
    <property type="match status" value="1"/>
</dbReference>
<dbReference type="NCBIfam" id="NF011501">
    <property type="entry name" value="PRK14939.1"/>
    <property type="match status" value="1"/>
</dbReference>
<dbReference type="PANTHER" id="PTHR45866:SF1">
    <property type="entry name" value="DNA GYRASE SUBUNIT B, MITOCHONDRIAL"/>
    <property type="match status" value="1"/>
</dbReference>
<dbReference type="PANTHER" id="PTHR45866">
    <property type="entry name" value="DNA GYRASE/TOPOISOMERASE SUBUNIT B"/>
    <property type="match status" value="1"/>
</dbReference>
<dbReference type="Pfam" id="PF00204">
    <property type="entry name" value="DNA_gyraseB"/>
    <property type="match status" value="1"/>
</dbReference>
<dbReference type="Pfam" id="PF00986">
    <property type="entry name" value="DNA_gyraseB_C"/>
    <property type="match status" value="1"/>
</dbReference>
<dbReference type="Pfam" id="PF02518">
    <property type="entry name" value="HATPase_c"/>
    <property type="match status" value="1"/>
</dbReference>
<dbReference type="Pfam" id="PF01751">
    <property type="entry name" value="Toprim"/>
    <property type="match status" value="1"/>
</dbReference>
<dbReference type="PRINTS" id="PR01159">
    <property type="entry name" value="DNAGYRASEB"/>
</dbReference>
<dbReference type="PRINTS" id="PR00418">
    <property type="entry name" value="TPI2FAMILY"/>
</dbReference>
<dbReference type="SMART" id="SM00387">
    <property type="entry name" value="HATPase_c"/>
    <property type="match status" value="1"/>
</dbReference>
<dbReference type="SMART" id="SM00433">
    <property type="entry name" value="TOP2c"/>
    <property type="match status" value="1"/>
</dbReference>
<dbReference type="SUPFAM" id="SSF55874">
    <property type="entry name" value="ATPase domain of HSP90 chaperone/DNA topoisomerase II/histidine kinase"/>
    <property type="match status" value="1"/>
</dbReference>
<dbReference type="SUPFAM" id="SSF54211">
    <property type="entry name" value="Ribosomal protein S5 domain 2-like"/>
    <property type="match status" value="1"/>
</dbReference>
<dbReference type="SUPFAM" id="SSF56719">
    <property type="entry name" value="Type II DNA topoisomerase"/>
    <property type="match status" value="1"/>
</dbReference>
<dbReference type="PROSITE" id="PS00177">
    <property type="entry name" value="TOPOISOMERASE_II"/>
    <property type="match status" value="1"/>
</dbReference>
<dbReference type="PROSITE" id="PS50880">
    <property type="entry name" value="TOPRIM"/>
    <property type="match status" value="1"/>
</dbReference>
<proteinExistence type="inferred from homology"/>
<gene>
    <name evidence="1" type="primary">gyrB</name>
    <name type="ordered locus">SPy_0727</name>
    <name type="ordered locus">M5005_Spy0553</name>
</gene>
<evidence type="ECO:0000255" key="1">
    <source>
        <dbReference type="HAMAP-Rule" id="MF_01898"/>
    </source>
</evidence>
<feature type="chain" id="PRO_0000145349" description="DNA gyrase subunit B">
    <location>
        <begin position="1"/>
        <end position="650"/>
    </location>
</feature>
<feature type="domain" description="Toprim" evidence="1">
    <location>
        <begin position="429"/>
        <end position="543"/>
    </location>
</feature>
<feature type="binding site" evidence="1">
    <location>
        <position position="435"/>
    </location>
    <ligand>
        <name>Mg(2+)</name>
        <dbReference type="ChEBI" id="CHEBI:18420"/>
        <label>1</label>
        <note>catalytic</note>
    </ligand>
</feature>
<feature type="binding site" evidence="1">
    <location>
        <position position="508"/>
    </location>
    <ligand>
        <name>Mg(2+)</name>
        <dbReference type="ChEBI" id="CHEBI:18420"/>
        <label>1</label>
        <note>catalytic</note>
    </ligand>
</feature>
<feature type="binding site" evidence="1">
    <location>
        <position position="508"/>
    </location>
    <ligand>
        <name>Mg(2+)</name>
        <dbReference type="ChEBI" id="CHEBI:18420"/>
        <label>2</label>
    </ligand>
</feature>
<feature type="binding site" evidence="1">
    <location>
        <position position="510"/>
    </location>
    <ligand>
        <name>Mg(2+)</name>
        <dbReference type="ChEBI" id="CHEBI:18420"/>
        <label>2</label>
    </ligand>
</feature>
<feature type="site" description="Interaction with DNA" evidence="1">
    <location>
        <position position="460"/>
    </location>
</feature>
<feature type="site" description="Interaction with DNA" evidence="1">
    <location>
        <position position="463"/>
    </location>
</feature>
<keyword id="KW-0067">ATP-binding</keyword>
<keyword id="KW-0963">Cytoplasm</keyword>
<keyword id="KW-0238">DNA-binding</keyword>
<keyword id="KW-0413">Isomerase</keyword>
<keyword id="KW-0460">Magnesium</keyword>
<keyword id="KW-0479">Metal-binding</keyword>
<keyword id="KW-0547">Nucleotide-binding</keyword>
<keyword id="KW-1185">Reference proteome</keyword>
<keyword id="KW-0799">Topoisomerase</keyword>
<reference key="1">
    <citation type="journal article" date="2001" name="Proc. Natl. Acad. Sci. U.S.A.">
        <title>Complete genome sequence of an M1 strain of Streptococcus pyogenes.</title>
        <authorList>
            <person name="Ferretti J.J."/>
            <person name="McShan W.M."/>
            <person name="Ajdic D.J."/>
            <person name="Savic D.J."/>
            <person name="Savic G."/>
            <person name="Lyon K."/>
            <person name="Primeaux C."/>
            <person name="Sezate S."/>
            <person name="Suvorov A.N."/>
            <person name="Kenton S."/>
            <person name="Lai H.S."/>
            <person name="Lin S.P."/>
            <person name="Qian Y."/>
            <person name="Jia H.G."/>
            <person name="Najar F.Z."/>
            <person name="Ren Q."/>
            <person name="Zhu H."/>
            <person name="Song L."/>
            <person name="White J."/>
            <person name="Yuan X."/>
            <person name="Clifton S.W."/>
            <person name="Roe B.A."/>
            <person name="McLaughlin R.E."/>
        </authorList>
    </citation>
    <scope>NUCLEOTIDE SEQUENCE [LARGE SCALE GENOMIC DNA]</scope>
    <source>
        <strain>ATCC 700294 / SF370 / Serotype M1</strain>
    </source>
</reference>
<reference key="2">
    <citation type="journal article" date="2005" name="J. Infect. Dis.">
        <title>Evolutionary origin and emergence of a highly successful clone of serotype M1 group A Streptococcus involved multiple horizontal gene transfer events.</title>
        <authorList>
            <person name="Sumby P."/>
            <person name="Porcella S.F."/>
            <person name="Madrigal A.G."/>
            <person name="Barbian K.D."/>
            <person name="Virtaneva K."/>
            <person name="Ricklefs S.M."/>
            <person name="Sturdevant D.E."/>
            <person name="Graham M.R."/>
            <person name="Vuopio-Varkila J."/>
            <person name="Hoe N.P."/>
            <person name="Musser J.M."/>
        </authorList>
    </citation>
    <scope>NUCLEOTIDE SEQUENCE [LARGE SCALE GENOMIC DNA]</scope>
    <source>
        <strain>ATCC BAA-947 / MGAS5005 / Serotype M1</strain>
    </source>
</reference>